<proteinExistence type="inferred from homology"/>
<comment type="function">
    <text evidence="1">Involved in peptide bond synthesis. Stimulates efficient translation and peptide-bond synthesis on native or reconstituted 70S ribosomes in vitro. Probably functions indirectly by altering the affinity of the ribosome for aminoacyl-tRNA, thus increasing their reactivity as acceptors for peptidyl transferase.</text>
</comment>
<comment type="pathway">
    <text evidence="1">Protein biosynthesis; polypeptide chain elongation.</text>
</comment>
<comment type="subcellular location">
    <subcellularLocation>
        <location evidence="1">Cytoplasm</location>
    </subcellularLocation>
</comment>
<comment type="similarity">
    <text evidence="1">Belongs to the elongation factor P family.</text>
</comment>
<reference key="1">
    <citation type="journal article" date="2009" name="Stand. Genomic Sci.">
        <title>Complete genome sequence of Beutenbergia cavernae type strain (HKI 0122).</title>
        <authorList>
            <person name="Land M."/>
            <person name="Pukall R."/>
            <person name="Abt B."/>
            <person name="Goker M."/>
            <person name="Rohde M."/>
            <person name="Glavina Del Rio T."/>
            <person name="Tice H."/>
            <person name="Copeland A."/>
            <person name="Cheng J.F."/>
            <person name="Lucas S."/>
            <person name="Chen F."/>
            <person name="Nolan M."/>
            <person name="Bruce D."/>
            <person name="Goodwin L."/>
            <person name="Pitluck S."/>
            <person name="Ivanova N."/>
            <person name="Mavromatis K."/>
            <person name="Ovchinnikova G."/>
            <person name="Pati A."/>
            <person name="Chen A."/>
            <person name="Palaniappan K."/>
            <person name="Hauser L."/>
            <person name="Chang Y.J."/>
            <person name="Jefferies C.C."/>
            <person name="Saunders E."/>
            <person name="Brettin T."/>
            <person name="Detter J.C."/>
            <person name="Han C."/>
            <person name="Chain P."/>
            <person name="Bristow J."/>
            <person name="Eisen J.A."/>
            <person name="Markowitz V."/>
            <person name="Hugenholtz P."/>
            <person name="Kyrpides N.C."/>
            <person name="Klenk H.P."/>
            <person name="Lapidus A."/>
        </authorList>
    </citation>
    <scope>NUCLEOTIDE SEQUENCE [LARGE SCALE GENOMIC DNA]</scope>
    <source>
        <strain>ATCC BAA-8 / DSM 12333 / CCUG 43141 / JCM 11478 / NBRC 16432 / NCIMB 13614 / HKI 0122</strain>
    </source>
</reference>
<evidence type="ECO:0000255" key="1">
    <source>
        <dbReference type="HAMAP-Rule" id="MF_00141"/>
    </source>
</evidence>
<sequence>MASTNDLKNGLVLDLDGQLWTVVEFQHVKPGKGPAFVRTKLKHVLSGKTVDKTFNAGIKVDTATVDKRDMQYLYKDGDDFVFMDSSDYEQFHVGPQIVGDAANFMLENTEVIVALHEGNPLYVELPTSVVLEITYTEPGLQGDRSSAGTKAATVETGYQIQVPLFLEIGTKVKVDTRSGDYLGRVN</sequence>
<name>EFP_BEUC1</name>
<keyword id="KW-0963">Cytoplasm</keyword>
<keyword id="KW-0251">Elongation factor</keyword>
<keyword id="KW-0648">Protein biosynthesis</keyword>
<keyword id="KW-1185">Reference proteome</keyword>
<gene>
    <name evidence="1" type="primary">efp</name>
    <name type="ordered locus">Bcav_2031</name>
</gene>
<accession>C5C680</accession>
<feature type="chain" id="PRO_1000203259" description="Elongation factor P">
    <location>
        <begin position="1"/>
        <end position="186"/>
    </location>
</feature>
<organism>
    <name type="scientific">Beutenbergia cavernae (strain ATCC BAA-8 / DSM 12333 / CCUG 43141 / JCM 11478 / NBRC 16432 / NCIMB 13614 / HKI 0122)</name>
    <dbReference type="NCBI Taxonomy" id="471853"/>
    <lineage>
        <taxon>Bacteria</taxon>
        <taxon>Bacillati</taxon>
        <taxon>Actinomycetota</taxon>
        <taxon>Actinomycetes</taxon>
        <taxon>Micrococcales</taxon>
        <taxon>Beutenbergiaceae</taxon>
        <taxon>Beutenbergia</taxon>
    </lineage>
</organism>
<protein>
    <recommendedName>
        <fullName evidence="1">Elongation factor P</fullName>
        <shortName evidence="1">EF-P</shortName>
    </recommendedName>
</protein>
<dbReference type="EMBL" id="CP001618">
    <property type="protein sequence ID" value="ACQ80286.1"/>
    <property type="molecule type" value="Genomic_DNA"/>
</dbReference>
<dbReference type="RefSeq" id="WP_015882526.1">
    <property type="nucleotide sequence ID" value="NC_012669.1"/>
</dbReference>
<dbReference type="SMR" id="C5C680"/>
<dbReference type="STRING" id="471853.Bcav_2031"/>
<dbReference type="KEGG" id="bcv:Bcav_2031"/>
<dbReference type="eggNOG" id="COG0231">
    <property type="taxonomic scope" value="Bacteria"/>
</dbReference>
<dbReference type="HOGENOM" id="CLU_074944_0_1_11"/>
<dbReference type="OrthoDB" id="9801844at2"/>
<dbReference type="UniPathway" id="UPA00345"/>
<dbReference type="Proteomes" id="UP000007962">
    <property type="component" value="Chromosome"/>
</dbReference>
<dbReference type="GO" id="GO:0005737">
    <property type="term" value="C:cytoplasm"/>
    <property type="evidence" value="ECO:0007669"/>
    <property type="project" value="UniProtKB-SubCell"/>
</dbReference>
<dbReference type="GO" id="GO:0003746">
    <property type="term" value="F:translation elongation factor activity"/>
    <property type="evidence" value="ECO:0007669"/>
    <property type="project" value="UniProtKB-UniRule"/>
</dbReference>
<dbReference type="GO" id="GO:0043043">
    <property type="term" value="P:peptide biosynthetic process"/>
    <property type="evidence" value="ECO:0007669"/>
    <property type="project" value="InterPro"/>
</dbReference>
<dbReference type="CDD" id="cd04470">
    <property type="entry name" value="S1_EF-P_repeat_1"/>
    <property type="match status" value="1"/>
</dbReference>
<dbReference type="CDD" id="cd05794">
    <property type="entry name" value="S1_EF-P_repeat_2"/>
    <property type="match status" value="1"/>
</dbReference>
<dbReference type="FunFam" id="2.30.30.30:FF:000003">
    <property type="entry name" value="Elongation factor P"/>
    <property type="match status" value="1"/>
</dbReference>
<dbReference type="FunFam" id="2.40.50.140:FF:000004">
    <property type="entry name" value="Elongation factor P"/>
    <property type="match status" value="1"/>
</dbReference>
<dbReference type="FunFam" id="2.40.50.140:FF:000009">
    <property type="entry name" value="Elongation factor P"/>
    <property type="match status" value="1"/>
</dbReference>
<dbReference type="Gene3D" id="2.30.30.30">
    <property type="match status" value="1"/>
</dbReference>
<dbReference type="Gene3D" id="2.40.50.140">
    <property type="entry name" value="Nucleic acid-binding proteins"/>
    <property type="match status" value="2"/>
</dbReference>
<dbReference type="HAMAP" id="MF_00141">
    <property type="entry name" value="EF_P"/>
    <property type="match status" value="1"/>
</dbReference>
<dbReference type="InterPro" id="IPR015365">
    <property type="entry name" value="Elong-fact-P_C"/>
</dbReference>
<dbReference type="InterPro" id="IPR012340">
    <property type="entry name" value="NA-bd_OB-fold"/>
</dbReference>
<dbReference type="InterPro" id="IPR014722">
    <property type="entry name" value="Rib_uL2_dom2"/>
</dbReference>
<dbReference type="InterPro" id="IPR020599">
    <property type="entry name" value="Transl_elong_fac_P/YeiP"/>
</dbReference>
<dbReference type="InterPro" id="IPR013185">
    <property type="entry name" value="Transl_elong_KOW-like"/>
</dbReference>
<dbReference type="InterPro" id="IPR001059">
    <property type="entry name" value="Transl_elong_P/YeiP_cen"/>
</dbReference>
<dbReference type="InterPro" id="IPR013852">
    <property type="entry name" value="Transl_elong_P/YeiP_CS"/>
</dbReference>
<dbReference type="InterPro" id="IPR011768">
    <property type="entry name" value="Transl_elongation_fac_P"/>
</dbReference>
<dbReference type="InterPro" id="IPR008991">
    <property type="entry name" value="Translation_prot_SH3-like_sf"/>
</dbReference>
<dbReference type="NCBIfam" id="TIGR00038">
    <property type="entry name" value="efp"/>
    <property type="match status" value="1"/>
</dbReference>
<dbReference type="NCBIfam" id="NF001810">
    <property type="entry name" value="PRK00529.1"/>
    <property type="match status" value="1"/>
</dbReference>
<dbReference type="PANTHER" id="PTHR30053">
    <property type="entry name" value="ELONGATION FACTOR P"/>
    <property type="match status" value="1"/>
</dbReference>
<dbReference type="PANTHER" id="PTHR30053:SF12">
    <property type="entry name" value="ELONGATION FACTOR P (EF-P) FAMILY PROTEIN"/>
    <property type="match status" value="1"/>
</dbReference>
<dbReference type="Pfam" id="PF01132">
    <property type="entry name" value="EFP"/>
    <property type="match status" value="1"/>
</dbReference>
<dbReference type="Pfam" id="PF08207">
    <property type="entry name" value="EFP_N"/>
    <property type="match status" value="1"/>
</dbReference>
<dbReference type="Pfam" id="PF09285">
    <property type="entry name" value="Elong-fact-P_C"/>
    <property type="match status" value="1"/>
</dbReference>
<dbReference type="PIRSF" id="PIRSF005901">
    <property type="entry name" value="EF-P"/>
    <property type="match status" value="1"/>
</dbReference>
<dbReference type="SMART" id="SM01185">
    <property type="entry name" value="EFP"/>
    <property type="match status" value="1"/>
</dbReference>
<dbReference type="SMART" id="SM00841">
    <property type="entry name" value="Elong-fact-P_C"/>
    <property type="match status" value="1"/>
</dbReference>
<dbReference type="SUPFAM" id="SSF50249">
    <property type="entry name" value="Nucleic acid-binding proteins"/>
    <property type="match status" value="2"/>
</dbReference>
<dbReference type="SUPFAM" id="SSF50104">
    <property type="entry name" value="Translation proteins SH3-like domain"/>
    <property type="match status" value="1"/>
</dbReference>
<dbReference type="PROSITE" id="PS01275">
    <property type="entry name" value="EFP"/>
    <property type="match status" value="1"/>
</dbReference>